<protein>
    <recommendedName>
        <fullName evidence="7">Omega-theraphotoxin-Pm1a</fullName>
        <shortName evidence="7">Omega-TRTX-Pm1a</shortName>
    </recommendedName>
    <alternativeName>
        <fullName evidence="6">Omega-theraphotoxin-Cc1a</fullName>
        <shortName evidence="6">Omega-TRTX-Cc1a</shortName>
    </alternativeName>
    <alternativeName>
        <fullName evidence="5">Toxin-like GVDKE</fullName>
    </alternativeName>
</protein>
<accession>D5J6X1</accession>
<accession>D5J6X4</accession>
<proteinExistence type="evidence at protein level"/>
<keyword id="KW-0108">Calcium channel impairing toxin</keyword>
<keyword id="KW-0903">Direct protein sequencing</keyword>
<keyword id="KW-1015">Disulfide bond</keyword>
<keyword id="KW-0872">Ion channel impairing toxin</keyword>
<keyword id="KW-0960">Knottin</keyword>
<keyword id="KW-0528">Neurotoxin</keyword>
<keyword id="KW-0964">Secreted</keyword>
<keyword id="KW-0732">Signal</keyword>
<keyword id="KW-0800">Toxin</keyword>
<keyword id="KW-1218">Voltage-gated calcium channel impairing toxin</keyword>
<feature type="signal peptide" evidence="2">
    <location>
        <begin position="1"/>
        <end position="21"/>
    </location>
</feature>
<feature type="propeptide" id="PRO_0000431733" evidence="3">
    <location>
        <begin position="22"/>
        <end position="45"/>
    </location>
</feature>
<feature type="chain" id="PRO_0000431734" description="Omega-theraphotoxin-Pm1a" evidence="4">
    <location>
        <begin position="46"/>
        <end position="84"/>
    </location>
</feature>
<feature type="disulfide bond" evidence="1">
    <location>
        <begin position="52"/>
        <end position="66"/>
    </location>
</feature>
<feature type="disulfide bond" evidence="1">
    <location>
        <begin position="59"/>
        <end position="71"/>
    </location>
</feature>
<feature type="disulfide bond" evidence="1">
    <location>
        <begin position="65"/>
        <end position="78"/>
    </location>
</feature>
<feature type="mutagenesis site" description="Small decrease in inhibition of Cav1.2/CACNA1C." evidence="4">
    <location>
        <begin position="46"/>
        <end position="50"/>
    </location>
</feature>
<feature type="mutagenesis site" description="Important decrease in inhibition of Cav1.2/CACNA1C." evidence="4">
    <location>
        <begin position="80"/>
        <end position="84"/>
    </location>
</feature>
<feature type="sequence conflict" description="In Ref. 1; ADF28495." evidence="7" ref="1">
    <original>V</original>
    <variation>A</variation>
    <location>
        <position position="36"/>
    </location>
</feature>
<evidence type="ECO:0000250" key="1">
    <source>
        <dbReference type="UniProtKB" id="B1P1E3"/>
    </source>
</evidence>
<evidence type="ECO:0000255" key="2"/>
<evidence type="ECO:0000269" key="3">
    <source>
    </source>
</evidence>
<evidence type="ECO:0000269" key="4">
    <source>
    </source>
</evidence>
<evidence type="ECO:0000303" key="5">
    <source>
    </source>
</evidence>
<evidence type="ECO:0000303" key="6">
    <source>
    </source>
</evidence>
<evidence type="ECO:0000305" key="7"/>
<dbReference type="EMBL" id="GU170866">
    <property type="protein sequence ID" value="ADF28492.1"/>
    <property type="molecule type" value="mRNA"/>
</dbReference>
<dbReference type="EMBL" id="GU170867">
    <property type="protein sequence ID" value="ADF28493.1"/>
    <property type="molecule type" value="mRNA"/>
</dbReference>
<dbReference type="EMBL" id="GU170868">
    <property type="protein sequence ID" value="ADF28494.1"/>
    <property type="molecule type" value="mRNA"/>
</dbReference>
<dbReference type="EMBL" id="GU170869">
    <property type="protein sequence ID" value="ADF28495.1"/>
    <property type="molecule type" value="mRNA"/>
</dbReference>
<dbReference type="SMR" id="D5J6X1"/>
<dbReference type="ArachnoServer" id="AS001640">
    <property type="toxin name" value="U1-theraphotoxin-Pm1a"/>
</dbReference>
<dbReference type="GO" id="GO:0005576">
    <property type="term" value="C:extracellular region"/>
    <property type="evidence" value="ECO:0007669"/>
    <property type="project" value="UniProtKB-SubCell"/>
</dbReference>
<dbReference type="GO" id="GO:0005246">
    <property type="term" value="F:calcium channel regulator activity"/>
    <property type="evidence" value="ECO:0007669"/>
    <property type="project" value="UniProtKB-KW"/>
</dbReference>
<dbReference type="GO" id="GO:0008200">
    <property type="term" value="F:ion channel inhibitor activity"/>
    <property type="evidence" value="ECO:0007669"/>
    <property type="project" value="InterPro"/>
</dbReference>
<dbReference type="GO" id="GO:0090729">
    <property type="term" value="F:toxin activity"/>
    <property type="evidence" value="ECO:0007669"/>
    <property type="project" value="UniProtKB-KW"/>
</dbReference>
<dbReference type="InterPro" id="IPR011696">
    <property type="entry name" value="Huwentoxin-1"/>
</dbReference>
<dbReference type="Pfam" id="PF07740">
    <property type="entry name" value="Toxin_12"/>
    <property type="match status" value="1"/>
</dbReference>
<dbReference type="SUPFAM" id="SSF57059">
    <property type="entry name" value="omega toxin-like"/>
    <property type="match status" value="1"/>
</dbReference>
<name>TXO1A_PELMU</name>
<reference key="1">
    <citation type="journal article" date="2010" name="Cell. Mol. Life Sci.">
        <title>Venom components from Citharischius crawshayi spider (Family Theraphosidae): exploring transcriptome, venomics, and function.</title>
        <authorList>
            <person name="Diego-Garcia E."/>
            <person name="Peigneur S."/>
            <person name="Waelkens E."/>
            <person name="Debaveye S."/>
            <person name="Tytgat J."/>
        </authorList>
    </citation>
    <scope>NUCLEOTIDE SEQUENCE [MRNA]</scope>
    <scope>MASS SPECTROMETRY</scope>
    <scope>SUBCELLULAR LOCATION</scope>
    <source>
        <tissue>Venom</tissue>
        <tissue>Venom gland</tissue>
    </source>
</reference>
<reference key="2">
    <citation type="journal article" date="2014" name="Biochem. Pharmacol.">
        <title>Isolation, synthesis and characterization of omega-TRTX-Cc1a, a novel tarantula venom peptide that selectively targets L-type Cav channels.</title>
        <authorList>
            <person name="Klint J.K."/>
            <person name="Berecki G."/>
            <person name="Durek T."/>
            <person name="Mobli M."/>
            <person name="Knapp O."/>
            <person name="King G.F."/>
            <person name="Adams D.J."/>
            <person name="Alewood P.F."/>
            <person name="Rash L.D."/>
        </authorList>
    </citation>
    <scope>PROTEIN SEQUENCE OF 46-84</scope>
    <scope>MASS SPECTROMETRY</scope>
    <scope>FUNCTION</scope>
    <scope>SYNTHESIS OF 46-84</scope>
    <scope>MUTAGENESIS OF 46-GLY--GLU-50 AND 80-TRP--VAL-84</scope>
    <scope>SUBCELLULAR LOCATION</scope>
    <scope>DOMAIN</scope>
    <source>
        <tissue>Venom</tissue>
    </source>
</reference>
<sequence length="84" mass="9195">MKTSMLAVFVALPLAFVLTAATEERAHPNELVNSLVELVKLDAERGVDKEGCKYMFGSCGKSDDCCPKLACKRTFNYCAWDGSV</sequence>
<comment type="function">
    <text evidence="4">Omega-conotoxins act at presynaptic membranes, they bind and block voltage-gated calcium channels (Cav). This toxin inhibits barium currents (IBa) mediated by L-type voltage-gated calcium channels Cav1.2/CACNA1C (IC(50)=825 nM) and Cav1.3/CACNA1C (IC(50)=2240 nM) (PubMed:24561180).</text>
</comment>
<comment type="subcellular location">
    <subcellularLocation>
        <location evidence="3 4">Secreted</location>
    </subcellularLocation>
</comment>
<comment type="tissue specificity">
    <text evidence="7">Expressed by the venom gland.</text>
</comment>
<comment type="domain">
    <text evidence="4">The presence of a 'disulfide through disulfide knot' structurally defines this protein as a knottin.</text>
</comment>
<comment type="mass spectrometry" mass="4267.85" method="MALDI" evidence="3"/>
<comment type="mass spectrometry" mass="4266.27" method="MALDI" evidence="4"/>
<comment type="miscellaneous">
    <text evidence="4">Negative results: only exhibits a weak activity on Nav1.5/SCN5A and Nav1.7/SCN9A voltage-gated sodium channel (at 3 uM, reduces by 39% and 17% the peak amplitude and slows inactivation) (PubMed:24561180). In addition, this toxin shows a little inhibition on Cav2.2/CACNA1B (20% at 3 uM), but does not inhibit Cav2.1/CACNA1A and Cav2.3/CACNA1E (PubMed:24561180).</text>
</comment>
<comment type="miscellaneous">
    <text evidence="4">Negative results: exists as two stable, slowly interconverting isomers.</text>
</comment>
<comment type="similarity">
    <text evidence="7">Belongs to the neurotoxin 10 (Hwtx-1) family. 41 (Jztx-36) subfamily.</text>
</comment>
<organism>
    <name type="scientific">Pelinobius muticus</name>
    <name type="common">King baboon spider</name>
    <name type="synonym">Citharischius crawshayi</name>
    <dbReference type="NCBI Taxonomy" id="753628"/>
    <lineage>
        <taxon>Eukaryota</taxon>
        <taxon>Metazoa</taxon>
        <taxon>Ecdysozoa</taxon>
        <taxon>Arthropoda</taxon>
        <taxon>Chelicerata</taxon>
        <taxon>Arachnida</taxon>
        <taxon>Araneae</taxon>
        <taxon>Mygalomorphae</taxon>
        <taxon>Theraphosidae</taxon>
        <taxon>Pelinobius</taxon>
    </lineage>
</organism>